<dbReference type="EMBL" id="CP017628">
    <property type="protein sequence ID" value="AOW29957.1"/>
    <property type="molecule type" value="Genomic_DNA"/>
</dbReference>
<dbReference type="RefSeq" id="XP_710504.1">
    <property type="nucleotide sequence ID" value="XM_705412.1"/>
</dbReference>
<dbReference type="STRING" id="237561.Q59L86"/>
<dbReference type="GlyCosmos" id="Q59L86">
    <property type="glycosylation" value="2 sites, No reported glycans"/>
</dbReference>
<dbReference type="EnsemblFungi" id="C6_00070C_A-T">
    <property type="protein sequence ID" value="C6_00070C_A-T-p1"/>
    <property type="gene ID" value="C6_00070C_A"/>
</dbReference>
<dbReference type="GeneID" id="3647890"/>
<dbReference type="KEGG" id="cal:CAALFM_C600070CA"/>
<dbReference type="CGD" id="CAL0000186851">
    <property type="gene designation" value="PGA25"/>
</dbReference>
<dbReference type="VEuPathDB" id="FungiDB:C6_00070C_A"/>
<dbReference type="HOGENOM" id="CLU_016383_0_0_1"/>
<dbReference type="InParanoid" id="Q59L86"/>
<dbReference type="OrthoDB" id="4028283at2759"/>
<dbReference type="Proteomes" id="UP000000559">
    <property type="component" value="Chromosome 6"/>
</dbReference>
<dbReference type="GO" id="GO:0005576">
    <property type="term" value="C:extracellular region"/>
    <property type="evidence" value="ECO:0007669"/>
    <property type="project" value="UniProtKB-KW"/>
</dbReference>
<dbReference type="GO" id="GO:0098552">
    <property type="term" value="C:side of membrane"/>
    <property type="evidence" value="ECO:0007669"/>
    <property type="project" value="UniProtKB-KW"/>
</dbReference>
<dbReference type="InterPro" id="IPR021642">
    <property type="entry name" value="DUF3246"/>
</dbReference>
<dbReference type="Pfam" id="PF11596">
    <property type="entry name" value="DUF3246"/>
    <property type="match status" value="2"/>
</dbReference>
<feature type="signal peptide" evidence="2">
    <location>
        <begin position="1"/>
        <end position="19"/>
    </location>
</feature>
<feature type="chain" id="PRO_0000424953" description="Probable GPI-anchored adhesin-like protein PGA25">
    <location>
        <begin position="20"/>
        <end position="845"/>
    </location>
</feature>
<feature type="propeptide" id="PRO_0000424954" description="Removed in mature form" evidence="2">
    <location>
        <begin position="846"/>
        <end position="872"/>
    </location>
</feature>
<feature type="region of interest" description="Disordered" evidence="3">
    <location>
        <begin position="43"/>
        <end position="383"/>
    </location>
</feature>
<feature type="region of interest" description="Disordered" evidence="3">
    <location>
        <begin position="492"/>
        <end position="517"/>
    </location>
</feature>
<feature type="region of interest" description="Disordered" evidence="3">
    <location>
        <begin position="623"/>
        <end position="809"/>
    </location>
</feature>
<feature type="compositionally biased region" description="Low complexity" evidence="3">
    <location>
        <begin position="43"/>
        <end position="65"/>
    </location>
</feature>
<feature type="compositionally biased region" description="Polar residues" evidence="3">
    <location>
        <begin position="66"/>
        <end position="83"/>
    </location>
</feature>
<feature type="compositionally biased region" description="Low complexity" evidence="3">
    <location>
        <begin position="84"/>
        <end position="110"/>
    </location>
</feature>
<feature type="compositionally biased region" description="Low complexity" evidence="3">
    <location>
        <begin position="125"/>
        <end position="171"/>
    </location>
</feature>
<feature type="compositionally biased region" description="Acidic residues" evidence="3">
    <location>
        <begin position="196"/>
        <end position="207"/>
    </location>
</feature>
<feature type="compositionally biased region" description="Low complexity" evidence="3">
    <location>
        <begin position="208"/>
        <end position="225"/>
    </location>
</feature>
<feature type="compositionally biased region" description="Low complexity" evidence="3">
    <location>
        <begin position="242"/>
        <end position="260"/>
    </location>
</feature>
<feature type="compositionally biased region" description="Low complexity" evidence="3">
    <location>
        <begin position="274"/>
        <end position="293"/>
    </location>
</feature>
<feature type="compositionally biased region" description="Acidic residues" evidence="3">
    <location>
        <begin position="317"/>
        <end position="328"/>
    </location>
</feature>
<feature type="compositionally biased region" description="Low complexity" evidence="3">
    <location>
        <begin position="349"/>
        <end position="363"/>
    </location>
</feature>
<feature type="compositionally biased region" description="Acidic residues" evidence="3">
    <location>
        <begin position="366"/>
        <end position="376"/>
    </location>
</feature>
<feature type="compositionally biased region" description="Polar residues" evidence="3">
    <location>
        <begin position="495"/>
        <end position="506"/>
    </location>
</feature>
<feature type="compositionally biased region" description="Acidic residues" evidence="3">
    <location>
        <begin position="624"/>
        <end position="635"/>
    </location>
</feature>
<feature type="compositionally biased region" description="Acidic residues" evidence="3">
    <location>
        <begin position="646"/>
        <end position="659"/>
    </location>
</feature>
<feature type="compositionally biased region" description="Gly residues" evidence="3">
    <location>
        <begin position="666"/>
        <end position="692"/>
    </location>
</feature>
<feature type="compositionally biased region" description="Gly residues" evidence="3">
    <location>
        <begin position="701"/>
        <end position="710"/>
    </location>
</feature>
<feature type="compositionally biased region" description="Gly residues" evidence="3">
    <location>
        <begin position="731"/>
        <end position="740"/>
    </location>
</feature>
<feature type="compositionally biased region" description="Low complexity" evidence="3">
    <location>
        <begin position="741"/>
        <end position="760"/>
    </location>
</feature>
<feature type="compositionally biased region" description="Gly residues" evidence="3">
    <location>
        <begin position="761"/>
        <end position="771"/>
    </location>
</feature>
<feature type="compositionally biased region" description="Acidic residues" evidence="3">
    <location>
        <begin position="780"/>
        <end position="808"/>
    </location>
</feature>
<feature type="lipid moiety-binding region" description="GPI-anchor amidated alanine" evidence="2">
    <location>
        <position position="845"/>
    </location>
</feature>
<feature type="glycosylation site" description="N-linked (GlcNAc...) asparagine" evidence="2">
    <location>
        <position position="92"/>
    </location>
</feature>
<feature type="glycosylation site" description="N-linked (GlcNAc...) asparagine" evidence="2">
    <location>
        <position position="290"/>
    </location>
</feature>
<comment type="function">
    <text evidence="1">Probable GPI-anchored cell wall protein involved in cell wall organization, hyphal growth, as well as in host-fungal interaction and virulence.</text>
</comment>
<comment type="subcellular location">
    <subcellularLocation>
        <location evidence="1">Secreted</location>
        <location evidence="1">Cell wall</location>
    </subcellularLocation>
    <subcellularLocation>
        <location evidence="7">Membrane</location>
        <topology evidence="7">Lipid-anchor</topology>
        <topology evidence="7">GPI-anchor</topology>
    </subcellularLocation>
</comment>
<comment type="induction">
    <text evidence="4 5 6">Up-regulated in biofilm, in oralpharyngeal candidasis, and upon milbemycins A3 oxim derivative (A3Ox). Down-regulated by fluconazole.</text>
</comment>
<comment type="PTM">
    <text evidence="1">The GPI-anchor is attached to the protein in the endoplasmic reticulum and serves to target the protein to the cell surface. There, the glucosamine-inositol phospholipid moiety is cleaved off and the GPI-modified mannoprotein is covalently attached via its lipidless GPI glycan remnant to the 1,6-beta-glucan of the outer cell wall layer (By similarity).</text>
</comment>
<comment type="similarity">
    <text evidence="7">Belongs to the HYR1/IFF family.</text>
</comment>
<gene>
    <name type="primary">PGA25</name>
    <name type="ordered locus">CAALFM_C600070CA</name>
    <name type="ORF">CaO19.6336</name>
</gene>
<keyword id="KW-0134">Cell wall</keyword>
<keyword id="KW-0325">Glycoprotein</keyword>
<keyword id="KW-0336">GPI-anchor</keyword>
<keyword id="KW-0449">Lipoprotein</keyword>
<keyword id="KW-0472">Membrane</keyword>
<keyword id="KW-1185">Reference proteome</keyword>
<keyword id="KW-0964">Secreted</keyword>
<keyword id="KW-0732">Signal</keyword>
<keyword id="KW-0843">Virulence</keyword>
<reference key="1">
    <citation type="journal article" date="2004" name="Proc. Natl. Acad. Sci. U.S.A.">
        <title>The diploid genome sequence of Candida albicans.</title>
        <authorList>
            <person name="Jones T."/>
            <person name="Federspiel N.A."/>
            <person name="Chibana H."/>
            <person name="Dungan J."/>
            <person name="Kalman S."/>
            <person name="Magee B.B."/>
            <person name="Newport G."/>
            <person name="Thorstenson Y.R."/>
            <person name="Agabian N."/>
            <person name="Magee P.T."/>
            <person name="Davis R.W."/>
            <person name="Scherer S."/>
        </authorList>
    </citation>
    <scope>NUCLEOTIDE SEQUENCE [LARGE SCALE GENOMIC DNA]</scope>
    <source>
        <strain>SC5314 / ATCC MYA-2876</strain>
    </source>
</reference>
<reference key="2">
    <citation type="journal article" date="2007" name="Genome Biol.">
        <title>Assembly of the Candida albicans genome into sixteen supercontigs aligned on the eight chromosomes.</title>
        <authorList>
            <person name="van het Hoog M."/>
            <person name="Rast T.J."/>
            <person name="Martchenko M."/>
            <person name="Grindle S."/>
            <person name="Dignard D."/>
            <person name="Hogues H."/>
            <person name="Cuomo C."/>
            <person name="Berriman M."/>
            <person name="Scherer S."/>
            <person name="Magee B.B."/>
            <person name="Whiteway M."/>
            <person name="Chibana H."/>
            <person name="Nantel A."/>
            <person name="Magee P.T."/>
        </authorList>
    </citation>
    <scope>GENOME REANNOTATION</scope>
    <source>
        <strain>SC5314 / ATCC MYA-2876</strain>
    </source>
</reference>
<reference key="3">
    <citation type="journal article" date="2013" name="Genome Biol.">
        <title>Assembly of a phased diploid Candida albicans genome facilitates allele-specific measurements and provides a simple model for repeat and indel structure.</title>
        <authorList>
            <person name="Muzzey D."/>
            <person name="Schwartz K."/>
            <person name="Weissman J.S."/>
            <person name="Sherlock G."/>
        </authorList>
    </citation>
    <scope>NUCLEOTIDE SEQUENCE [LARGE SCALE GENOMIC DNA]</scope>
    <scope>GENOME REANNOTATION</scope>
    <source>
        <strain>SC5314 / ATCC MYA-2876</strain>
    </source>
</reference>
<reference key="4">
    <citation type="journal article" date="2003" name="Yeast">
        <title>Genome-wide identification of fungal GPI proteins.</title>
        <authorList>
            <person name="De Groot P.W."/>
            <person name="Hellingwerf K.J."/>
            <person name="Klis F.M."/>
        </authorList>
    </citation>
    <scope>PREDICTION OF GPI-ANCHOR</scope>
</reference>
<reference key="5">
    <citation type="journal article" date="2005" name="J. Antimicrob. Chemother.">
        <title>Exposure of Candida albicans to antifungal agents affects expression of SAP2 and SAP9 secreted proteinase genes.</title>
        <authorList>
            <person name="Copping V.M.S."/>
            <person name="Barelle C.J."/>
            <person name="Hube B."/>
            <person name="Gow N.A.R."/>
            <person name="Brown A.J.P."/>
            <person name="Odds F.C."/>
        </authorList>
    </citation>
    <scope>INDUCTION</scope>
</reference>
<reference key="6">
    <citation type="journal article" date="2011" name="BMC Genomics">
        <title>FungalRV: adhesin prediction and immunoinformatics portal for human fungal pathogens.</title>
        <authorList>
            <person name="Chaudhuri R."/>
            <person name="Ansari F.A."/>
            <person name="Raghunandanan M.V."/>
            <person name="Ramachandran S."/>
        </authorList>
    </citation>
    <scope>PREDICTION OF FUNCTION</scope>
</reference>
<reference key="7">
    <citation type="journal article" date="2012" name="Eukaryot. Cell">
        <title>Divergent targets of Candida albicans biofilm regulator Bcr1 in vitro and in vivo.</title>
        <authorList>
            <person name="Fanning S."/>
            <person name="Xu W."/>
            <person name="Solis N."/>
            <person name="Woolford C.A."/>
            <person name="Filler S.G."/>
            <person name="Mitchell A.P."/>
        </authorList>
    </citation>
    <scope>INDUCTION</scope>
</reference>
<reference key="8">
    <citation type="journal article" date="2013" name="Antimicrob. Agents Chemother.">
        <title>Milbemycins: more than efflux inhibitors for fungal pathogens.</title>
        <authorList>
            <person name="Silva L.V."/>
            <person name="Sanguinetti M."/>
            <person name="Vandeputte P."/>
            <person name="Torelli R."/>
            <person name="Rochat B."/>
            <person name="Sanglard D."/>
        </authorList>
    </citation>
    <scope>INDUCTION</scope>
</reference>
<organism>
    <name type="scientific">Candida albicans (strain SC5314 / ATCC MYA-2876)</name>
    <name type="common">Yeast</name>
    <dbReference type="NCBI Taxonomy" id="237561"/>
    <lineage>
        <taxon>Eukaryota</taxon>
        <taxon>Fungi</taxon>
        <taxon>Dikarya</taxon>
        <taxon>Ascomycota</taxon>
        <taxon>Saccharomycotina</taxon>
        <taxon>Pichiomycetes</taxon>
        <taxon>Debaryomycetaceae</taxon>
        <taxon>Candida/Lodderomyces clade</taxon>
        <taxon>Candida</taxon>
    </lineage>
</organism>
<evidence type="ECO:0000250" key="1"/>
<evidence type="ECO:0000255" key="2"/>
<evidence type="ECO:0000256" key="3">
    <source>
        <dbReference type="SAM" id="MobiDB-lite"/>
    </source>
</evidence>
<evidence type="ECO:0000269" key="4">
    <source>
    </source>
</evidence>
<evidence type="ECO:0000269" key="5">
    <source>
    </source>
</evidence>
<evidence type="ECO:0000269" key="6">
    <source>
    </source>
</evidence>
<evidence type="ECO:0000305" key="7"/>
<accession>Q59L86</accession>
<accession>A0A1D8PP85</accession>
<protein>
    <recommendedName>
        <fullName>Probable GPI-anchored adhesin-like protein PGA25</fullName>
    </recommendedName>
    <alternativeName>
        <fullName>Predicted GPI-anchored protein 25</fullName>
    </alternativeName>
</protein>
<proteinExistence type="evidence at protein level"/>
<sequence>MKVTAVSSVLLTVAALTNANEIDKRSFFGDLFSGLTGSKAAAPAAAPAAQPAAQPTTQSPADQPTVQSPVSSDQPSTAQPVAQNNLLLDSSNSTLVVPSSSKSSTTTRSTAGLLDNLLGGSGATSSEASSSEAPSSEAPSSEAPSSEAPSSEAPSSEAPSSSSSEALSSSSTTKRPTAAAKGFFGDLFGTQSSASETDDEDCVEETESPTSAPASAPTTSKVATTTGGGLPNILSDLFPGKSSAPISSAESSPTVASSTTGFPNILSDLFPGKSSVPSSSAETSTTVASNTTTSGGGFPNILSDLFPGKSSVPSSSAEEDDEECEDPTESVTSNSSPTGGISIPTFPITSQSKTSVSSVVSKSTSEDDDDETECETDIPTIIPSGSVLPTTSVLPTIIPTGSGSITILPTKSATSDDDDDETDCETDIPTIVPTESATIIPTGSGSVTIIPTGSGSITVLPTKSATSDDDDDETDCETDIPTIIPTGTATIKPTGSGSITVLPTKSTTTDDDDDETDCETEIPTIHPTVSTTRTFTSDGVPTTQTLTTKLPPTTNQHTETEVVSITYTGGGQTFTTYLTQSGEICDETVTLTITTTCPSTTVAPGGQIYTTTVTVITTHTVYPDDWEDDGYEGEDNAGGSASGSSDDGEWEWYEEDDGECVPTGGSSSGSGTGSWWGSGAGSSGGTTSGSGSGSSSNSGASSGGTWGGSGNDYVCPGEEGYDDEEPDNGGSWWGGSGSGSSSGSSSGVSSGDSGSSSVTGGSSGSWWGGSGNDYVCPGEDGYDDEDDQTPEPECDDEDDSWDDDEECDTQAAKEVVNSVTVAAESVYPSTTAASLTTSWISTQTAQSVTQIENIGGKVSASGLFVVLGLLLI</sequence>
<name>PGA25_CANAL</name>